<sequence>MIGTILAVGFGGFLGAISRMLTSSFFNKIIPHDFPYGTLLVNIIGSFLMGLFFSYASSKGVHIFTKSLISTGFLSAFTTFSTFSYENLLFLQSGDYFHFFLNIILNVILCLLAVWIGFLIFK</sequence>
<name>FLUC_CAMLR</name>
<accession>B9KG48</accession>
<dbReference type="EMBL" id="CP000932">
    <property type="protein sequence ID" value="ACM64033.1"/>
    <property type="molecule type" value="Genomic_DNA"/>
</dbReference>
<dbReference type="RefSeq" id="WP_012661416.1">
    <property type="nucleotide sequence ID" value="NC_012039.1"/>
</dbReference>
<dbReference type="SMR" id="B9KG48"/>
<dbReference type="STRING" id="306263.Cla_0704"/>
<dbReference type="KEGG" id="cla:CLA_0704"/>
<dbReference type="PATRIC" id="fig|306263.5.peg.685"/>
<dbReference type="eggNOG" id="COG0239">
    <property type="taxonomic scope" value="Bacteria"/>
</dbReference>
<dbReference type="HOGENOM" id="CLU_114342_3_0_7"/>
<dbReference type="Proteomes" id="UP000007727">
    <property type="component" value="Chromosome"/>
</dbReference>
<dbReference type="GO" id="GO:0005886">
    <property type="term" value="C:plasma membrane"/>
    <property type="evidence" value="ECO:0007669"/>
    <property type="project" value="UniProtKB-SubCell"/>
</dbReference>
<dbReference type="GO" id="GO:0062054">
    <property type="term" value="F:fluoride channel activity"/>
    <property type="evidence" value="ECO:0007669"/>
    <property type="project" value="UniProtKB-UniRule"/>
</dbReference>
<dbReference type="GO" id="GO:0140114">
    <property type="term" value="P:cellular detoxification of fluoride"/>
    <property type="evidence" value="ECO:0007669"/>
    <property type="project" value="UniProtKB-UniRule"/>
</dbReference>
<dbReference type="HAMAP" id="MF_00454">
    <property type="entry name" value="FluC"/>
    <property type="match status" value="1"/>
</dbReference>
<dbReference type="InterPro" id="IPR003691">
    <property type="entry name" value="FluC"/>
</dbReference>
<dbReference type="NCBIfam" id="TIGR00494">
    <property type="entry name" value="crcB"/>
    <property type="match status" value="1"/>
</dbReference>
<dbReference type="PANTHER" id="PTHR28259">
    <property type="entry name" value="FLUORIDE EXPORT PROTEIN 1-RELATED"/>
    <property type="match status" value="1"/>
</dbReference>
<dbReference type="PANTHER" id="PTHR28259:SF1">
    <property type="entry name" value="FLUORIDE EXPORT PROTEIN 1-RELATED"/>
    <property type="match status" value="1"/>
</dbReference>
<dbReference type="Pfam" id="PF02537">
    <property type="entry name" value="CRCB"/>
    <property type="match status" value="1"/>
</dbReference>
<gene>
    <name evidence="1" type="primary">fluC</name>
    <name evidence="1" type="synonym">crcB</name>
    <name type="ordered locus">Cla_0704</name>
</gene>
<comment type="function">
    <text evidence="1">Fluoride-specific ion channel. Important for reducing fluoride concentration in the cell, thus reducing its toxicity.</text>
</comment>
<comment type="catalytic activity">
    <reaction evidence="1">
        <text>fluoride(in) = fluoride(out)</text>
        <dbReference type="Rhea" id="RHEA:76159"/>
        <dbReference type="ChEBI" id="CHEBI:17051"/>
    </reaction>
    <physiologicalReaction direction="left-to-right" evidence="1">
        <dbReference type="Rhea" id="RHEA:76160"/>
    </physiologicalReaction>
</comment>
<comment type="subcellular location">
    <subcellularLocation>
        <location evidence="1">Cell inner membrane</location>
        <topology evidence="1">Multi-pass membrane protein</topology>
    </subcellularLocation>
</comment>
<comment type="similarity">
    <text evidence="1">Belongs to the fluoride channel Fluc/FEX (TC 1.A.43) family.</text>
</comment>
<feature type="chain" id="PRO_1000135315" description="Fluoride-specific ion channel FluC">
    <location>
        <begin position="1"/>
        <end position="122"/>
    </location>
</feature>
<feature type="transmembrane region" description="Helical" evidence="1">
    <location>
        <begin position="1"/>
        <end position="21"/>
    </location>
</feature>
<feature type="transmembrane region" description="Helical" evidence="1">
    <location>
        <begin position="34"/>
        <end position="54"/>
    </location>
</feature>
<feature type="transmembrane region" description="Helical" evidence="1">
    <location>
        <begin position="60"/>
        <end position="80"/>
    </location>
</feature>
<feature type="transmembrane region" description="Helical" evidence="1">
    <location>
        <begin position="100"/>
        <end position="120"/>
    </location>
</feature>
<evidence type="ECO:0000255" key="1">
    <source>
        <dbReference type="HAMAP-Rule" id="MF_00454"/>
    </source>
</evidence>
<reference key="1">
    <citation type="journal article" date="2008" name="Foodborne Pathog. Dis.">
        <title>The complete genome sequence and analysis of the human pathogen Campylobacter lari.</title>
        <authorList>
            <person name="Miller W.G."/>
            <person name="Wang G."/>
            <person name="Binnewies T.T."/>
            <person name="Parker C.T."/>
        </authorList>
    </citation>
    <scope>NUCLEOTIDE SEQUENCE [LARGE SCALE GENOMIC DNA]</scope>
    <source>
        <strain>RM2100 / D67 / ATCC BAA-1060</strain>
    </source>
</reference>
<protein>
    <recommendedName>
        <fullName evidence="1">Fluoride-specific ion channel FluC</fullName>
    </recommendedName>
</protein>
<proteinExistence type="inferred from homology"/>
<organism>
    <name type="scientific">Campylobacter lari (strain RM2100 / D67 / ATCC BAA-1060)</name>
    <dbReference type="NCBI Taxonomy" id="306263"/>
    <lineage>
        <taxon>Bacteria</taxon>
        <taxon>Pseudomonadati</taxon>
        <taxon>Campylobacterota</taxon>
        <taxon>Epsilonproteobacteria</taxon>
        <taxon>Campylobacterales</taxon>
        <taxon>Campylobacteraceae</taxon>
        <taxon>Campylobacter</taxon>
    </lineage>
</organism>
<keyword id="KW-0997">Cell inner membrane</keyword>
<keyword id="KW-1003">Cell membrane</keyword>
<keyword id="KW-0407">Ion channel</keyword>
<keyword id="KW-0406">Ion transport</keyword>
<keyword id="KW-0472">Membrane</keyword>
<keyword id="KW-1185">Reference proteome</keyword>
<keyword id="KW-0812">Transmembrane</keyword>
<keyword id="KW-1133">Transmembrane helix</keyword>
<keyword id="KW-0813">Transport</keyword>